<feature type="chain" id="PRO_0000344754" description="Large ribosomal subunit protein bL36c">
    <location>
        <begin position="1"/>
        <end position="37"/>
    </location>
</feature>
<dbReference type="EMBL" id="AM711639">
    <property type="protein sequence ID" value="CAM98358.1"/>
    <property type="molecule type" value="Genomic_DNA"/>
</dbReference>
<dbReference type="RefSeq" id="YP_001430071.1">
    <property type="nucleotide sequence ID" value="NC_009765.1"/>
</dbReference>
<dbReference type="SMR" id="A7M930"/>
<dbReference type="GeneID" id="5536755"/>
<dbReference type="GO" id="GO:0009536">
    <property type="term" value="C:plastid"/>
    <property type="evidence" value="ECO:0007669"/>
    <property type="project" value="UniProtKB-SubCell"/>
</dbReference>
<dbReference type="GO" id="GO:1990904">
    <property type="term" value="C:ribonucleoprotein complex"/>
    <property type="evidence" value="ECO:0007669"/>
    <property type="project" value="UniProtKB-KW"/>
</dbReference>
<dbReference type="GO" id="GO:0005840">
    <property type="term" value="C:ribosome"/>
    <property type="evidence" value="ECO:0007669"/>
    <property type="project" value="UniProtKB-KW"/>
</dbReference>
<dbReference type="GO" id="GO:0003735">
    <property type="term" value="F:structural constituent of ribosome"/>
    <property type="evidence" value="ECO:0007669"/>
    <property type="project" value="InterPro"/>
</dbReference>
<dbReference type="GO" id="GO:0006412">
    <property type="term" value="P:translation"/>
    <property type="evidence" value="ECO:0007669"/>
    <property type="project" value="InterPro"/>
</dbReference>
<dbReference type="HAMAP" id="MF_00251">
    <property type="entry name" value="Ribosomal_bL36"/>
    <property type="match status" value="1"/>
</dbReference>
<dbReference type="InterPro" id="IPR000473">
    <property type="entry name" value="Ribosomal_bL36"/>
</dbReference>
<dbReference type="InterPro" id="IPR035977">
    <property type="entry name" value="Ribosomal_bL36_sp"/>
</dbReference>
<dbReference type="NCBIfam" id="TIGR01022">
    <property type="entry name" value="rpmJ_bact"/>
    <property type="match status" value="1"/>
</dbReference>
<dbReference type="PANTHER" id="PTHR42888">
    <property type="entry name" value="50S RIBOSOMAL PROTEIN L36, CHLOROPLASTIC"/>
    <property type="match status" value="1"/>
</dbReference>
<dbReference type="PANTHER" id="PTHR42888:SF1">
    <property type="entry name" value="LARGE RIBOSOMAL SUBUNIT PROTEIN BL36C"/>
    <property type="match status" value="1"/>
</dbReference>
<dbReference type="Pfam" id="PF00444">
    <property type="entry name" value="Ribosomal_L36"/>
    <property type="match status" value="1"/>
</dbReference>
<dbReference type="SUPFAM" id="SSF57840">
    <property type="entry name" value="Ribosomal protein L36"/>
    <property type="match status" value="1"/>
</dbReference>
<dbReference type="PROSITE" id="PS00828">
    <property type="entry name" value="RIBOSOMAL_L36"/>
    <property type="match status" value="1"/>
</dbReference>
<keyword id="KW-0934">Plastid</keyword>
<keyword id="KW-0687">Ribonucleoprotein</keyword>
<keyword id="KW-0689">Ribosomal protein</keyword>
<geneLocation type="plastid"/>
<proteinExistence type="inferred from homology"/>
<protein>
    <recommendedName>
        <fullName evidence="2">Large ribosomal subunit protein bL36c</fullName>
    </recommendedName>
    <alternativeName>
        <fullName>Plastid 50S ribosomal protein L36</fullName>
    </alternativeName>
</protein>
<reference key="1">
    <citation type="journal article" date="2007" name="BMC Plant Biol.">
        <title>Complete DNA sequences of the plastid genomes of two parasitic flowering plant species, Cuscuta reflexa and Cuscuta gronovii.</title>
        <authorList>
            <person name="Funk H.T."/>
            <person name="Berg S."/>
            <person name="Krupinska K."/>
            <person name="Maier U.-G."/>
            <person name="Krause K."/>
        </authorList>
    </citation>
    <scope>NUCLEOTIDE SEQUENCE [LARGE SCALE GENOMIC DNA]</scope>
</reference>
<accession>A7M930</accession>
<organism>
    <name type="scientific">Cuscuta gronovii</name>
    <name type="common">Common dodder</name>
    <name type="synonym">Epithymum gronovii</name>
    <dbReference type="NCBI Taxonomy" id="35886"/>
    <lineage>
        <taxon>Eukaryota</taxon>
        <taxon>Viridiplantae</taxon>
        <taxon>Streptophyta</taxon>
        <taxon>Embryophyta</taxon>
        <taxon>Tracheophyta</taxon>
        <taxon>Spermatophyta</taxon>
        <taxon>Magnoliopsida</taxon>
        <taxon>eudicotyledons</taxon>
        <taxon>Gunneridae</taxon>
        <taxon>Pentapetalae</taxon>
        <taxon>asterids</taxon>
        <taxon>lamiids</taxon>
        <taxon>Solanales</taxon>
        <taxon>Convolvulaceae</taxon>
        <taxon>Cuscuteae</taxon>
        <taxon>Cuscuta</taxon>
        <taxon>Cuscuta subgen. Grammica</taxon>
        <taxon>Cuscuta sect. Oxycarpae</taxon>
    </lineage>
</organism>
<sequence length="37" mass="4263">MKKRASVRKICDKCRLIRRGGRILVICSNPRHKQGQG</sequence>
<name>RK36_CUSGR</name>
<evidence type="ECO:0000255" key="1">
    <source>
        <dbReference type="HAMAP-Rule" id="MF_00251"/>
    </source>
</evidence>
<evidence type="ECO:0000305" key="2"/>
<gene>
    <name evidence="1" type="primary">rpl36</name>
</gene>
<comment type="subcellular location">
    <subcellularLocation>
        <location>Plastid</location>
    </subcellularLocation>
</comment>
<comment type="similarity">
    <text evidence="1">Belongs to the bacterial ribosomal protein bL36 family.</text>
</comment>